<protein>
    <recommendedName>
        <fullName evidence="1">ATP phosphoribosyltransferase</fullName>
        <shortName evidence="1">ATP-PRT</shortName>
        <shortName evidence="1">ATP-PRTase</shortName>
        <ecNumber evidence="1">2.4.2.17</ecNumber>
    </recommendedName>
</protein>
<organism>
    <name type="scientific">Pseudomonas putida (strain W619)</name>
    <dbReference type="NCBI Taxonomy" id="390235"/>
    <lineage>
        <taxon>Bacteria</taxon>
        <taxon>Pseudomonadati</taxon>
        <taxon>Pseudomonadota</taxon>
        <taxon>Gammaproteobacteria</taxon>
        <taxon>Pseudomonadales</taxon>
        <taxon>Pseudomonadaceae</taxon>
        <taxon>Pseudomonas</taxon>
    </lineage>
</organism>
<gene>
    <name evidence="1" type="primary">hisG</name>
    <name type="ordered locus">PputW619_4250</name>
</gene>
<name>HIS1_PSEPW</name>
<reference key="1">
    <citation type="submission" date="2008-02" db="EMBL/GenBank/DDBJ databases">
        <title>Complete sequence of Pseudomonas putida W619.</title>
        <authorList>
            <person name="Copeland A."/>
            <person name="Lucas S."/>
            <person name="Lapidus A."/>
            <person name="Barry K."/>
            <person name="Detter J.C."/>
            <person name="Glavina del Rio T."/>
            <person name="Dalin E."/>
            <person name="Tice H."/>
            <person name="Pitluck S."/>
            <person name="Chain P."/>
            <person name="Malfatti S."/>
            <person name="Shin M."/>
            <person name="Vergez L."/>
            <person name="Schmutz J."/>
            <person name="Larimer F."/>
            <person name="Land M."/>
            <person name="Hauser L."/>
            <person name="Kyrpides N."/>
            <person name="Kim E."/>
            <person name="Taghavi S."/>
            <person name="Vangronsveld D."/>
            <person name="van der Lelie D."/>
            <person name="Richardson P."/>
        </authorList>
    </citation>
    <scope>NUCLEOTIDE SEQUENCE [LARGE SCALE GENOMIC DNA]</scope>
    <source>
        <strain>W619</strain>
    </source>
</reference>
<accession>B1JBC2</accession>
<proteinExistence type="inferred from homology"/>
<feature type="chain" id="PRO_1000135290" description="ATP phosphoribosyltransferase">
    <location>
        <begin position="1"/>
        <end position="211"/>
    </location>
</feature>
<evidence type="ECO:0000255" key="1">
    <source>
        <dbReference type="HAMAP-Rule" id="MF_01018"/>
    </source>
</evidence>
<dbReference type="EC" id="2.4.2.17" evidence="1"/>
<dbReference type="EMBL" id="CP000949">
    <property type="protein sequence ID" value="ACA74730.1"/>
    <property type="molecule type" value="Genomic_DNA"/>
</dbReference>
<dbReference type="SMR" id="B1JBC2"/>
<dbReference type="STRING" id="390235.PputW619_4250"/>
<dbReference type="KEGG" id="ppw:PputW619_4250"/>
<dbReference type="eggNOG" id="COG0040">
    <property type="taxonomic scope" value="Bacteria"/>
</dbReference>
<dbReference type="HOGENOM" id="CLU_038115_2_0_6"/>
<dbReference type="OrthoDB" id="9801867at2"/>
<dbReference type="UniPathway" id="UPA00031">
    <property type="reaction ID" value="UER00006"/>
</dbReference>
<dbReference type="GO" id="GO:0005737">
    <property type="term" value="C:cytoplasm"/>
    <property type="evidence" value="ECO:0007669"/>
    <property type="project" value="UniProtKB-SubCell"/>
</dbReference>
<dbReference type="GO" id="GO:0005524">
    <property type="term" value="F:ATP binding"/>
    <property type="evidence" value="ECO:0007669"/>
    <property type="project" value="UniProtKB-KW"/>
</dbReference>
<dbReference type="GO" id="GO:0003879">
    <property type="term" value="F:ATP phosphoribosyltransferase activity"/>
    <property type="evidence" value="ECO:0007669"/>
    <property type="project" value="UniProtKB-UniRule"/>
</dbReference>
<dbReference type="GO" id="GO:0000105">
    <property type="term" value="P:L-histidine biosynthetic process"/>
    <property type="evidence" value="ECO:0007669"/>
    <property type="project" value="UniProtKB-UniRule"/>
</dbReference>
<dbReference type="CDD" id="cd13595">
    <property type="entry name" value="PBP2_HisGs"/>
    <property type="match status" value="1"/>
</dbReference>
<dbReference type="FunFam" id="3.40.190.10:FF:000011">
    <property type="entry name" value="ATP phosphoribosyltransferase"/>
    <property type="match status" value="1"/>
</dbReference>
<dbReference type="FunFam" id="3.40.190.10:FF:000022">
    <property type="entry name" value="ATP phosphoribosyltransferase"/>
    <property type="match status" value="1"/>
</dbReference>
<dbReference type="Gene3D" id="3.40.190.10">
    <property type="entry name" value="Periplasmic binding protein-like II"/>
    <property type="match status" value="2"/>
</dbReference>
<dbReference type="HAMAP" id="MF_01018">
    <property type="entry name" value="HisG_Short"/>
    <property type="match status" value="1"/>
</dbReference>
<dbReference type="InterPro" id="IPR013820">
    <property type="entry name" value="ATP_PRibTrfase_cat"/>
</dbReference>
<dbReference type="InterPro" id="IPR018198">
    <property type="entry name" value="ATP_PRibTrfase_CS"/>
</dbReference>
<dbReference type="InterPro" id="IPR001348">
    <property type="entry name" value="ATP_PRibTrfase_HisG"/>
</dbReference>
<dbReference type="InterPro" id="IPR024893">
    <property type="entry name" value="ATP_PRibTrfase_HisG_short"/>
</dbReference>
<dbReference type="NCBIfam" id="TIGR00070">
    <property type="entry name" value="hisG"/>
    <property type="match status" value="1"/>
</dbReference>
<dbReference type="PANTHER" id="PTHR21403:SF8">
    <property type="entry name" value="ATP PHOSPHORIBOSYLTRANSFERASE"/>
    <property type="match status" value="1"/>
</dbReference>
<dbReference type="PANTHER" id="PTHR21403">
    <property type="entry name" value="ATP PHOSPHORIBOSYLTRANSFERASE ATP-PRTASE"/>
    <property type="match status" value="1"/>
</dbReference>
<dbReference type="Pfam" id="PF01634">
    <property type="entry name" value="HisG"/>
    <property type="match status" value="1"/>
</dbReference>
<dbReference type="SUPFAM" id="SSF53850">
    <property type="entry name" value="Periplasmic binding protein-like II"/>
    <property type="match status" value="1"/>
</dbReference>
<dbReference type="PROSITE" id="PS01316">
    <property type="entry name" value="ATP_P_PHORIBOSYLTR"/>
    <property type="match status" value="1"/>
</dbReference>
<comment type="function">
    <text evidence="1">Catalyzes the condensation of ATP and 5-phosphoribose 1-diphosphate to form N'-(5'-phosphoribosyl)-ATP (PR-ATP). Has a crucial role in the pathway because the rate of histidine biosynthesis seems to be controlled primarily by regulation of HisG enzymatic activity.</text>
</comment>
<comment type="catalytic activity">
    <reaction evidence="1">
        <text>1-(5-phospho-beta-D-ribosyl)-ATP + diphosphate = 5-phospho-alpha-D-ribose 1-diphosphate + ATP</text>
        <dbReference type="Rhea" id="RHEA:18473"/>
        <dbReference type="ChEBI" id="CHEBI:30616"/>
        <dbReference type="ChEBI" id="CHEBI:33019"/>
        <dbReference type="ChEBI" id="CHEBI:58017"/>
        <dbReference type="ChEBI" id="CHEBI:73183"/>
        <dbReference type="EC" id="2.4.2.17"/>
    </reaction>
</comment>
<comment type="pathway">
    <text evidence="1">Amino-acid biosynthesis; L-histidine biosynthesis; L-histidine from 5-phospho-alpha-D-ribose 1-diphosphate: step 1/9.</text>
</comment>
<comment type="subunit">
    <text evidence="1">Heteromultimer composed of HisG and HisZ subunits.</text>
</comment>
<comment type="subcellular location">
    <subcellularLocation>
        <location evidence="1">Cytoplasm</location>
    </subcellularLocation>
</comment>
<comment type="domain">
    <text>Lacks the C-terminal regulatory region which is replaced by HisZ.</text>
</comment>
<comment type="similarity">
    <text evidence="1">Belongs to the ATP phosphoribosyltransferase family. Short subfamily.</text>
</comment>
<keyword id="KW-0028">Amino-acid biosynthesis</keyword>
<keyword id="KW-0067">ATP-binding</keyword>
<keyword id="KW-0963">Cytoplasm</keyword>
<keyword id="KW-0328">Glycosyltransferase</keyword>
<keyword id="KW-0368">Histidine biosynthesis</keyword>
<keyword id="KW-0547">Nucleotide-binding</keyword>
<keyword id="KW-0808">Transferase</keyword>
<sequence>MLTIALSKGRILDDTLPLLAEAGIVPTENPDKSRKLIIPTTQDDVRLLIVRATDVPTYVEHGAADLGVAGKDVLMEYGGQGLYEPLDLQIARCKLMTAGVVGAPEPKGRLRVATKFVNVAKRYYAEQGRQVDIIKLYGSMELAPLINLADKIIDVVDTGNTLRANGLEPQDLIATISSRLVVNKASMKMQHARIQSLIDTLRQAVESRHRG</sequence>